<accession>Q5SD07</accession>
<evidence type="ECO:0000255" key="1">
    <source>
        <dbReference type="HAMAP-Rule" id="MF_00439"/>
    </source>
</evidence>
<dbReference type="EMBL" id="AY660566">
    <property type="protein sequence ID" value="AAT80724.1"/>
    <property type="molecule type" value="Genomic_DNA"/>
</dbReference>
<dbReference type="RefSeq" id="YP_209528.1">
    <property type="nucleotide sequence ID" value="NC_006861.1"/>
</dbReference>
<dbReference type="SMR" id="Q5SD07"/>
<dbReference type="GeneID" id="3283749"/>
<dbReference type="GO" id="GO:0009535">
    <property type="term" value="C:chloroplast thylakoid membrane"/>
    <property type="evidence" value="ECO:0007669"/>
    <property type="project" value="UniProtKB-SubCell"/>
</dbReference>
<dbReference type="GO" id="GO:0015979">
    <property type="term" value="P:photosynthesis"/>
    <property type="evidence" value="ECO:0007669"/>
    <property type="project" value="UniProtKB-UniRule"/>
</dbReference>
<dbReference type="FunFam" id="1.25.40.10:FF:000004">
    <property type="entry name" value="Photosystem I assembly protein Ycf3"/>
    <property type="match status" value="1"/>
</dbReference>
<dbReference type="Gene3D" id="1.25.40.10">
    <property type="entry name" value="Tetratricopeptide repeat domain"/>
    <property type="match status" value="1"/>
</dbReference>
<dbReference type="HAMAP" id="MF_00439">
    <property type="entry name" value="Ycf3"/>
    <property type="match status" value="1"/>
</dbReference>
<dbReference type="InterPro" id="IPR022818">
    <property type="entry name" value="PSI_Ycf3_assembly"/>
</dbReference>
<dbReference type="InterPro" id="IPR011990">
    <property type="entry name" value="TPR-like_helical_dom_sf"/>
</dbReference>
<dbReference type="InterPro" id="IPR019734">
    <property type="entry name" value="TPR_rpt"/>
</dbReference>
<dbReference type="NCBIfam" id="NF002725">
    <property type="entry name" value="PRK02603.1"/>
    <property type="match status" value="1"/>
</dbReference>
<dbReference type="Pfam" id="PF00515">
    <property type="entry name" value="TPR_1"/>
    <property type="match status" value="1"/>
</dbReference>
<dbReference type="SMART" id="SM00028">
    <property type="entry name" value="TPR"/>
    <property type="match status" value="3"/>
</dbReference>
<dbReference type="SUPFAM" id="SSF48452">
    <property type="entry name" value="TPR-like"/>
    <property type="match status" value="1"/>
</dbReference>
<dbReference type="PROSITE" id="PS50005">
    <property type="entry name" value="TPR"/>
    <property type="match status" value="3"/>
</dbReference>
<dbReference type="PROSITE" id="PS50293">
    <property type="entry name" value="TPR_REGION"/>
    <property type="match status" value="1"/>
</dbReference>
<protein>
    <recommendedName>
        <fullName evidence="1">Photosystem I assembly protein Ycf3</fullName>
    </recommendedName>
</protein>
<feature type="chain" id="PRO_0000217805" description="Photosystem I assembly protein Ycf3">
    <location>
        <begin position="1"/>
        <end position="169"/>
    </location>
</feature>
<feature type="repeat" description="TPR 1">
    <location>
        <begin position="35"/>
        <end position="68"/>
    </location>
</feature>
<feature type="repeat" description="TPR 2">
    <location>
        <begin position="72"/>
        <end position="105"/>
    </location>
</feature>
<feature type="repeat" description="TPR 3">
    <location>
        <begin position="120"/>
        <end position="153"/>
    </location>
</feature>
<reference key="1">
    <citation type="journal article" date="2005" name="Gene">
        <title>The first complete chloroplast genome sequence of a lycophyte, Huperzia lucidula (Lycopodiaceae).</title>
        <authorList>
            <person name="Wolf P.G."/>
            <person name="Karol K.G."/>
            <person name="Mandoli D.F."/>
            <person name="Kuehl J.V."/>
            <person name="Arumuganathan K."/>
            <person name="Ellis M.W."/>
            <person name="Mishler B.D."/>
            <person name="Kelch D.G."/>
            <person name="Olmstead R.G."/>
            <person name="Boore J.L."/>
        </authorList>
    </citation>
    <scope>NUCLEOTIDE SEQUENCE [LARGE SCALE GENOMIC DNA]</scope>
</reference>
<organism>
    <name type="scientific">Huperzia lucidula</name>
    <name type="common">Shining clubmoss</name>
    <name type="synonym">Lycopodium lucidulum</name>
    <dbReference type="NCBI Taxonomy" id="37429"/>
    <lineage>
        <taxon>Eukaryota</taxon>
        <taxon>Viridiplantae</taxon>
        <taxon>Streptophyta</taxon>
        <taxon>Embryophyta</taxon>
        <taxon>Tracheophyta</taxon>
        <taxon>Lycopodiopsida</taxon>
        <taxon>Lycopodiales</taxon>
        <taxon>Lycopodiaceae</taxon>
        <taxon>Huperzioideae</taxon>
        <taxon>Huperzia</taxon>
    </lineage>
</organism>
<keyword id="KW-0150">Chloroplast</keyword>
<keyword id="KW-0472">Membrane</keyword>
<keyword id="KW-0602">Photosynthesis</keyword>
<keyword id="KW-0934">Plastid</keyword>
<keyword id="KW-0677">Repeat</keyword>
<keyword id="KW-0793">Thylakoid</keyword>
<keyword id="KW-0802">TPR repeat</keyword>
<sequence length="169" mass="19424">MPRSQRNDNFIDKTFTLVADTSLQVIPTTQGEKKAFTYYRDGMSAQSEGEYAEASQNYYEAMRLEIDPYDRSYILHNIGLIHTSNGEHARALEYYFQALERNPSLPQAFNNMAVICHYRGEQAIQQGDFETSEAWFGKAADHWKQAVLLAPGNYIEAQNWLKITGRLKD</sequence>
<geneLocation type="chloroplast"/>
<gene>
    <name evidence="1" type="primary">ycf3</name>
</gene>
<name>YCF3_HUPLU</name>
<comment type="function">
    <text evidence="1">Essential for the assembly of the photosystem I (PSI) complex. May act as a chaperone-like factor to guide the assembly of the PSI subunits.</text>
</comment>
<comment type="subcellular location">
    <subcellularLocation>
        <location evidence="1">Plastid</location>
        <location evidence="1">Chloroplast thylakoid membrane</location>
        <topology evidence="1">Peripheral membrane protein</topology>
    </subcellularLocation>
</comment>
<comment type="similarity">
    <text evidence="1">Belongs to the Ycf3 family.</text>
</comment>
<proteinExistence type="inferred from homology"/>